<sequence length="194" mass="21808">MADNVAGNDRLIWIDLEMTGLDTDRDSIIEIATIVTDAQLNVLAEGPELAIAHSLETLEAMDEWNRNQHRRSGLWQRVLDSQVTHAQAEAQTVAFLSEWIRAGASPMCGNSICQDRRFLHRQMSRLERYFHYRNLDVSTIKELARRWAPAVASGFAKSSAHTALSDVRDSIDELRHYRQFMGTLGGDNGGGVQN</sequence>
<proteinExistence type="evidence at protein level"/>
<comment type="function">
    <text evidence="1">3'-to-5' exoribonuclease specific for small oligoribonucleotides.</text>
</comment>
<comment type="subcellular location">
    <subcellularLocation>
        <location evidence="1">Cytoplasm</location>
    </subcellularLocation>
</comment>
<comment type="similarity">
    <text evidence="1">Belongs to the oligoribonuclease family.</text>
</comment>
<organism>
    <name type="scientific">Xanthomonas campestris pv. campestris (strain ATCC 33913 / DSM 3586 / NCPPB 528 / LMG 568 / P 25)</name>
    <dbReference type="NCBI Taxonomy" id="190485"/>
    <lineage>
        <taxon>Bacteria</taxon>
        <taxon>Pseudomonadati</taxon>
        <taxon>Pseudomonadota</taxon>
        <taxon>Gammaproteobacteria</taxon>
        <taxon>Lysobacterales</taxon>
        <taxon>Lysobacteraceae</taxon>
        <taxon>Xanthomonas</taxon>
    </lineage>
</organism>
<keyword id="KW-0002">3D-structure</keyword>
<keyword id="KW-0963">Cytoplasm</keyword>
<keyword id="KW-0269">Exonuclease</keyword>
<keyword id="KW-0378">Hydrolase</keyword>
<keyword id="KW-0540">Nuclease</keyword>
<keyword id="KW-1185">Reference proteome</keyword>
<accession>Q8P8S1</accession>
<reference key="1">
    <citation type="journal article" date="2002" name="Nature">
        <title>Comparison of the genomes of two Xanthomonas pathogens with differing host specificities.</title>
        <authorList>
            <person name="da Silva A.C.R."/>
            <person name="Ferro J.A."/>
            <person name="Reinach F.C."/>
            <person name="Farah C.S."/>
            <person name="Furlan L.R."/>
            <person name="Quaggio R.B."/>
            <person name="Monteiro-Vitorello C.B."/>
            <person name="Van Sluys M.A."/>
            <person name="Almeida N.F. Jr."/>
            <person name="Alves L.M.C."/>
            <person name="do Amaral A.M."/>
            <person name="Bertolini M.C."/>
            <person name="Camargo L.E.A."/>
            <person name="Camarotte G."/>
            <person name="Cannavan F."/>
            <person name="Cardozo J."/>
            <person name="Chambergo F."/>
            <person name="Ciapina L.P."/>
            <person name="Cicarelli R.M.B."/>
            <person name="Coutinho L.L."/>
            <person name="Cursino-Santos J.R."/>
            <person name="El-Dorry H."/>
            <person name="Faria J.B."/>
            <person name="Ferreira A.J.S."/>
            <person name="Ferreira R.C.C."/>
            <person name="Ferro M.I.T."/>
            <person name="Formighieri E.F."/>
            <person name="Franco M.C."/>
            <person name="Greggio C.C."/>
            <person name="Gruber A."/>
            <person name="Katsuyama A.M."/>
            <person name="Kishi L.T."/>
            <person name="Leite R.P."/>
            <person name="Lemos E.G.M."/>
            <person name="Lemos M.V.F."/>
            <person name="Locali E.C."/>
            <person name="Machado M.A."/>
            <person name="Madeira A.M.B.N."/>
            <person name="Martinez-Rossi N.M."/>
            <person name="Martins E.C."/>
            <person name="Meidanis J."/>
            <person name="Menck C.F.M."/>
            <person name="Miyaki C.Y."/>
            <person name="Moon D.H."/>
            <person name="Moreira L.M."/>
            <person name="Novo M.T.M."/>
            <person name="Okura V.K."/>
            <person name="Oliveira M.C."/>
            <person name="Oliveira V.R."/>
            <person name="Pereira H.A."/>
            <person name="Rossi A."/>
            <person name="Sena J.A.D."/>
            <person name="Silva C."/>
            <person name="de Souza R.F."/>
            <person name="Spinola L.A.F."/>
            <person name="Takita M.A."/>
            <person name="Tamura R.E."/>
            <person name="Teixeira E.C."/>
            <person name="Tezza R.I.D."/>
            <person name="Trindade dos Santos M."/>
            <person name="Truffi D."/>
            <person name="Tsai S.M."/>
            <person name="White F.F."/>
            <person name="Setubal J.C."/>
            <person name="Kitajima J.P."/>
        </authorList>
    </citation>
    <scope>NUCLEOTIDE SEQUENCE [LARGE SCALE GENOMIC DNA]</scope>
    <source>
        <strain>ATCC 33913 / DSM 3586 / NCPPB 528 / LMG 568 / P 25</strain>
    </source>
</reference>
<evidence type="ECO:0000255" key="1">
    <source>
        <dbReference type="HAMAP-Rule" id="MF_00045"/>
    </source>
</evidence>
<evidence type="ECO:0007829" key="2">
    <source>
        <dbReference type="PDB" id="2GBZ"/>
    </source>
</evidence>
<gene>
    <name evidence="1" type="primary">orn</name>
    <name type="ordered locus">XCC2168</name>
</gene>
<name>ORN_XANCP</name>
<dbReference type="EC" id="3.1.15.-" evidence="1"/>
<dbReference type="EMBL" id="AE008922">
    <property type="protein sequence ID" value="AAM41448.1"/>
    <property type="molecule type" value="Genomic_DNA"/>
</dbReference>
<dbReference type="RefSeq" id="NP_637524.1">
    <property type="nucleotide sequence ID" value="NC_003902.1"/>
</dbReference>
<dbReference type="RefSeq" id="WP_011037314.1">
    <property type="nucleotide sequence ID" value="NC_003902.1"/>
</dbReference>
<dbReference type="PDB" id="2GBZ">
    <property type="method" value="X-ray"/>
    <property type="resolution" value="2.30 A"/>
    <property type="chains" value="A=1-194"/>
</dbReference>
<dbReference type="PDBsum" id="2GBZ"/>
<dbReference type="SMR" id="Q8P8S1"/>
<dbReference type="STRING" id="190485.XCC2168"/>
<dbReference type="EnsemblBacteria" id="AAM41448">
    <property type="protein sequence ID" value="AAM41448"/>
    <property type="gene ID" value="XCC2168"/>
</dbReference>
<dbReference type="KEGG" id="xcc:XCC2168"/>
<dbReference type="PATRIC" id="fig|190485.4.peg.2315"/>
<dbReference type="eggNOG" id="COG1949">
    <property type="taxonomic scope" value="Bacteria"/>
</dbReference>
<dbReference type="HOGENOM" id="CLU_064761_2_0_6"/>
<dbReference type="OrthoDB" id="9801329at2"/>
<dbReference type="EvolutionaryTrace" id="Q8P8S1"/>
<dbReference type="Proteomes" id="UP000001010">
    <property type="component" value="Chromosome"/>
</dbReference>
<dbReference type="GO" id="GO:0005737">
    <property type="term" value="C:cytoplasm"/>
    <property type="evidence" value="ECO:0007669"/>
    <property type="project" value="UniProtKB-SubCell"/>
</dbReference>
<dbReference type="GO" id="GO:0000175">
    <property type="term" value="F:3'-5'-RNA exonuclease activity"/>
    <property type="evidence" value="ECO:0007669"/>
    <property type="project" value="InterPro"/>
</dbReference>
<dbReference type="GO" id="GO:0003676">
    <property type="term" value="F:nucleic acid binding"/>
    <property type="evidence" value="ECO:0007669"/>
    <property type="project" value="InterPro"/>
</dbReference>
<dbReference type="GO" id="GO:0006259">
    <property type="term" value="P:DNA metabolic process"/>
    <property type="evidence" value="ECO:0007669"/>
    <property type="project" value="UniProtKB-ARBA"/>
</dbReference>
<dbReference type="CDD" id="cd06135">
    <property type="entry name" value="Orn"/>
    <property type="match status" value="1"/>
</dbReference>
<dbReference type="FunFam" id="3.30.420.10:FF:000003">
    <property type="entry name" value="Oligoribonuclease"/>
    <property type="match status" value="1"/>
</dbReference>
<dbReference type="Gene3D" id="3.30.420.10">
    <property type="entry name" value="Ribonuclease H-like superfamily/Ribonuclease H"/>
    <property type="match status" value="1"/>
</dbReference>
<dbReference type="HAMAP" id="MF_00045">
    <property type="entry name" value="Oligoribonuclease"/>
    <property type="match status" value="1"/>
</dbReference>
<dbReference type="InterPro" id="IPR013520">
    <property type="entry name" value="Exonuclease_RNaseT/DNA_pol3"/>
</dbReference>
<dbReference type="InterPro" id="IPR022894">
    <property type="entry name" value="Oligoribonuclease"/>
</dbReference>
<dbReference type="InterPro" id="IPR012337">
    <property type="entry name" value="RNaseH-like_sf"/>
</dbReference>
<dbReference type="InterPro" id="IPR036397">
    <property type="entry name" value="RNaseH_sf"/>
</dbReference>
<dbReference type="NCBIfam" id="NF003765">
    <property type="entry name" value="PRK05359.1"/>
    <property type="match status" value="1"/>
</dbReference>
<dbReference type="PANTHER" id="PTHR11046">
    <property type="entry name" value="OLIGORIBONUCLEASE, MITOCHONDRIAL"/>
    <property type="match status" value="1"/>
</dbReference>
<dbReference type="PANTHER" id="PTHR11046:SF0">
    <property type="entry name" value="OLIGORIBONUCLEASE, MITOCHONDRIAL"/>
    <property type="match status" value="1"/>
</dbReference>
<dbReference type="Pfam" id="PF00929">
    <property type="entry name" value="RNase_T"/>
    <property type="match status" value="1"/>
</dbReference>
<dbReference type="SMART" id="SM00479">
    <property type="entry name" value="EXOIII"/>
    <property type="match status" value="1"/>
</dbReference>
<dbReference type="SUPFAM" id="SSF53098">
    <property type="entry name" value="Ribonuclease H-like"/>
    <property type="match status" value="1"/>
</dbReference>
<protein>
    <recommendedName>
        <fullName evidence="1">Oligoribonuclease</fullName>
        <ecNumber evidence="1">3.1.15.-</ecNumber>
    </recommendedName>
</protein>
<feature type="chain" id="PRO_0000111084" description="Oligoribonuclease">
    <location>
        <begin position="1"/>
        <end position="194"/>
    </location>
</feature>
<feature type="domain" description="Exonuclease" evidence="1">
    <location>
        <begin position="11"/>
        <end position="174"/>
    </location>
</feature>
<feature type="active site" evidence="1">
    <location>
        <position position="132"/>
    </location>
</feature>
<feature type="strand" evidence="2">
    <location>
        <begin position="10"/>
        <end position="19"/>
    </location>
</feature>
<feature type="turn" evidence="2">
    <location>
        <begin position="23"/>
        <end position="25"/>
    </location>
</feature>
<feature type="strand" evidence="2">
    <location>
        <begin position="28"/>
        <end position="37"/>
    </location>
</feature>
<feature type="strand" evidence="2">
    <location>
        <begin position="42"/>
        <end position="45"/>
    </location>
</feature>
<feature type="helix" evidence="2">
    <location>
        <begin position="55"/>
        <end position="59"/>
    </location>
</feature>
<feature type="helix" evidence="2">
    <location>
        <begin position="64"/>
        <end position="72"/>
    </location>
</feature>
<feature type="helix" evidence="2">
    <location>
        <begin position="74"/>
        <end position="80"/>
    </location>
</feature>
<feature type="helix" evidence="2">
    <location>
        <begin position="85"/>
        <end position="96"/>
    </location>
</feature>
<feature type="turn" evidence="2">
    <location>
        <begin position="97"/>
        <end position="99"/>
    </location>
</feature>
<feature type="strand" evidence="2">
    <location>
        <begin position="107"/>
        <end position="111"/>
    </location>
</feature>
<feature type="helix" evidence="2">
    <location>
        <begin position="112"/>
        <end position="122"/>
    </location>
</feature>
<feature type="helix" evidence="2">
    <location>
        <begin position="124"/>
        <end position="129"/>
    </location>
</feature>
<feature type="strand" evidence="2">
    <location>
        <begin position="134"/>
        <end position="136"/>
    </location>
</feature>
<feature type="helix" evidence="2">
    <location>
        <begin position="137"/>
        <end position="147"/>
    </location>
</feature>
<feature type="helix" evidence="2">
    <location>
        <begin position="149"/>
        <end position="152"/>
    </location>
</feature>
<feature type="helix" evidence="2">
    <location>
        <begin position="163"/>
        <end position="178"/>
    </location>
</feature>
<feature type="helix" evidence="2">
    <location>
        <begin position="182"/>
        <end position="185"/>
    </location>
</feature>